<evidence type="ECO:0000255" key="1">
    <source>
        <dbReference type="HAMAP-Rule" id="MF_00148"/>
    </source>
</evidence>
<name>UNG_MYCGI</name>
<dbReference type="EC" id="3.2.2.27" evidence="1"/>
<dbReference type="EMBL" id="CP000656">
    <property type="protein sequence ID" value="ABP46684.1"/>
    <property type="molecule type" value="Genomic_DNA"/>
</dbReference>
<dbReference type="SMR" id="A4TE31"/>
<dbReference type="STRING" id="350054.Mflv_4215"/>
<dbReference type="KEGG" id="mgi:Mflv_4215"/>
<dbReference type="eggNOG" id="COG0692">
    <property type="taxonomic scope" value="Bacteria"/>
</dbReference>
<dbReference type="HOGENOM" id="CLU_032162_3_1_11"/>
<dbReference type="OrthoDB" id="9804372at2"/>
<dbReference type="GO" id="GO:0005737">
    <property type="term" value="C:cytoplasm"/>
    <property type="evidence" value="ECO:0007669"/>
    <property type="project" value="UniProtKB-SubCell"/>
</dbReference>
<dbReference type="GO" id="GO:0004844">
    <property type="term" value="F:uracil DNA N-glycosylase activity"/>
    <property type="evidence" value="ECO:0007669"/>
    <property type="project" value="UniProtKB-UniRule"/>
</dbReference>
<dbReference type="GO" id="GO:0097510">
    <property type="term" value="P:base-excision repair, AP site formation via deaminated base removal"/>
    <property type="evidence" value="ECO:0007669"/>
    <property type="project" value="TreeGrafter"/>
</dbReference>
<dbReference type="CDD" id="cd10027">
    <property type="entry name" value="UDG-F1-like"/>
    <property type="match status" value="1"/>
</dbReference>
<dbReference type="FunFam" id="3.40.470.10:FF:000006">
    <property type="entry name" value="Uracil-DNA glycosylase"/>
    <property type="match status" value="1"/>
</dbReference>
<dbReference type="Gene3D" id="3.40.470.10">
    <property type="entry name" value="Uracil-DNA glycosylase-like domain"/>
    <property type="match status" value="1"/>
</dbReference>
<dbReference type="HAMAP" id="MF_00148">
    <property type="entry name" value="UDG"/>
    <property type="match status" value="1"/>
</dbReference>
<dbReference type="InterPro" id="IPR002043">
    <property type="entry name" value="UDG_fam1"/>
</dbReference>
<dbReference type="InterPro" id="IPR018085">
    <property type="entry name" value="Ura-DNA_Glyclase_AS"/>
</dbReference>
<dbReference type="InterPro" id="IPR005122">
    <property type="entry name" value="Uracil-DNA_glycosylase-like"/>
</dbReference>
<dbReference type="InterPro" id="IPR036895">
    <property type="entry name" value="Uracil-DNA_glycosylase-like_sf"/>
</dbReference>
<dbReference type="NCBIfam" id="NF003588">
    <property type="entry name" value="PRK05254.1-1"/>
    <property type="match status" value="1"/>
</dbReference>
<dbReference type="NCBIfam" id="NF003592">
    <property type="entry name" value="PRK05254.1-5"/>
    <property type="match status" value="1"/>
</dbReference>
<dbReference type="NCBIfam" id="TIGR00628">
    <property type="entry name" value="ung"/>
    <property type="match status" value="1"/>
</dbReference>
<dbReference type="PANTHER" id="PTHR11264">
    <property type="entry name" value="URACIL-DNA GLYCOSYLASE"/>
    <property type="match status" value="1"/>
</dbReference>
<dbReference type="PANTHER" id="PTHR11264:SF0">
    <property type="entry name" value="URACIL-DNA GLYCOSYLASE"/>
    <property type="match status" value="1"/>
</dbReference>
<dbReference type="Pfam" id="PF03167">
    <property type="entry name" value="UDG"/>
    <property type="match status" value="1"/>
</dbReference>
<dbReference type="SMART" id="SM00986">
    <property type="entry name" value="UDG"/>
    <property type="match status" value="1"/>
</dbReference>
<dbReference type="SMART" id="SM00987">
    <property type="entry name" value="UreE_C"/>
    <property type="match status" value="1"/>
</dbReference>
<dbReference type="SUPFAM" id="SSF52141">
    <property type="entry name" value="Uracil-DNA glycosylase-like"/>
    <property type="match status" value="1"/>
</dbReference>
<dbReference type="PROSITE" id="PS00130">
    <property type="entry name" value="U_DNA_GLYCOSYLASE"/>
    <property type="match status" value="1"/>
</dbReference>
<accession>A4TE31</accession>
<sequence length="225" mass="24482">MNARPLSELVDDGWAAALAPVESQVAQMGEFLRAELAAGHRYLPAGPNILRAFTFPLEKVRVLIVGQDPYPTPGHAVGLSFSVAPDVRPLPRSLDNIFKEYRADLGHPAPSNGDLTPWCEQGVMLLNRVLTVRPGTPASHRGKGWEAVTECAIRALVARRQPMVAVLWGRDASTLKPMLEDTAVIESPHPSPLSASRGFFGSKPFSRANELLAQRGAEPVDWRLP</sequence>
<gene>
    <name evidence="1" type="primary">ung</name>
    <name type="ordered locus">Mflv_4215</name>
</gene>
<feature type="chain" id="PRO_1000076675" description="Uracil-DNA glycosylase">
    <location>
        <begin position="1"/>
        <end position="225"/>
    </location>
</feature>
<feature type="active site" description="Proton acceptor" evidence="1">
    <location>
        <position position="68"/>
    </location>
</feature>
<protein>
    <recommendedName>
        <fullName evidence="1">Uracil-DNA glycosylase</fullName>
        <shortName evidence="1">UDG</shortName>
        <ecNumber evidence="1">3.2.2.27</ecNumber>
    </recommendedName>
</protein>
<comment type="function">
    <text evidence="1">Excises uracil residues from the DNA which can arise as a result of misincorporation of dUMP residues by DNA polymerase or due to deamination of cytosine.</text>
</comment>
<comment type="catalytic activity">
    <reaction evidence="1">
        <text>Hydrolyzes single-stranded DNA or mismatched double-stranded DNA and polynucleotides, releasing free uracil.</text>
        <dbReference type="EC" id="3.2.2.27"/>
    </reaction>
</comment>
<comment type="subcellular location">
    <subcellularLocation>
        <location evidence="1">Cytoplasm</location>
    </subcellularLocation>
</comment>
<comment type="similarity">
    <text evidence="1">Belongs to the uracil-DNA glycosylase (UDG) superfamily. UNG family.</text>
</comment>
<reference key="1">
    <citation type="submission" date="2007-04" db="EMBL/GenBank/DDBJ databases">
        <title>Complete sequence of chromosome of Mycobacterium gilvum PYR-GCK.</title>
        <authorList>
            <consortium name="US DOE Joint Genome Institute"/>
            <person name="Copeland A."/>
            <person name="Lucas S."/>
            <person name="Lapidus A."/>
            <person name="Barry K."/>
            <person name="Detter J.C."/>
            <person name="Glavina del Rio T."/>
            <person name="Hammon N."/>
            <person name="Israni S."/>
            <person name="Dalin E."/>
            <person name="Tice H."/>
            <person name="Pitluck S."/>
            <person name="Chain P."/>
            <person name="Malfatti S."/>
            <person name="Shin M."/>
            <person name="Vergez L."/>
            <person name="Schmutz J."/>
            <person name="Larimer F."/>
            <person name="Land M."/>
            <person name="Hauser L."/>
            <person name="Kyrpides N."/>
            <person name="Mikhailova N."/>
            <person name="Miller C."/>
            <person name="Richardson P."/>
        </authorList>
    </citation>
    <scope>NUCLEOTIDE SEQUENCE [LARGE SCALE GENOMIC DNA]</scope>
    <source>
        <strain>PYR-GCK</strain>
    </source>
</reference>
<proteinExistence type="inferred from homology"/>
<keyword id="KW-0963">Cytoplasm</keyword>
<keyword id="KW-0227">DNA damage</keyword>
<keyword id="KW-0234">DNA repair</keyword>
<keyword id="KW-0378">Hydrolase</keyword>
<organism>
    <name type="scientific">Mycolicibacterium gilvum (strain PYR-GCK)</name>
    <name type="common">Mycobacterium gilvum (strain PYR-GCK)</name>
    <dbReference type="NCBI Taxonomy" id="350054"/>
    <lineage>
        <taxon>Bacteria</taxon>
        <taxon>Bacillati</taxon>
        <taxon>Actinomycetota</taxon>
        <taxon>Actinomycetes</taxon>
        <taxon>Mycobacteriales</taxon>
        <taxon>Mycobacteriaceae</taxon>
        <taxon>Mycolicibacterium</taxon>
    </lineage>
</organism>